<keyword id="KW-1185">Reference proteome</keyword>
<keyword id="KW-0687">Ribonucleoprotein</keyword>
<keyword id="KW-0689">Ribosomal protein</keyword>
<keyword id="KW-0694">RNA-binding</keyword>
<keyword id="KW-0699">rRNA-binding</keyword>
<organism>
    <name type="scientific">Rhizobium leguminosarum bv. trifolii (strain WSM2304)</name>
    <dbReference type="NCBI Taxonomy" id="395492"/>
    <lineage>
        <taxon>Bacteria</taxon>
        <taxon>Pseudomonadati</taxon>
        <taxon>Pseudomonadota</taxon>
        <taxon>Alphaproteobacteria</taxon>
        <taxon>Hyphomicrobiales</taxon>
        <taxon>Rhizobiaceae</taxon>
        <taxon>Rhizobium/Agrobacterium group</taxon>
        <taxon>Rhizobium</taxon>
    </lineage>
</organism>
<protein>
    <recommendedName>
        <fullName evidence="1">Large ribosomal subunit protein uL14</fullName>
    </recommendedName>
    <alternativeName>
        <fullName evidence="2">50S ribosomal protein L14</fullName>
    </alternativeName>
</protein>
<comment type="function">
    <text evidence="1">Binds to 23S rRNA. Forms part of two intersubunit bridges in the 70S ribosome.</text>
</comment>
<comment type="subunit">
    <text evidence="1">Part of the 50S ribosomal subunit. Forms a cluster with proteins L3 and L19. In the 70S ribosome, L14 and L19 interact and together make contacts with the 16S rRNA in bridges B5 and B8.</text>
</comment>
<comment type="similarity">
    <text evidence="1">Belongs to the universal ribosomal protein uL14 family.</text>
</comment>
<gene>
    <name evidence="1" type="primary">rplN</name>
    <name type="ordered locus">Rleg2_1342</name>
</gene>
<feature type="chain" id="PRO_1000144318" description="Large ribosomal subunit protein uL14">
    <location>
        <begin position="1"/>
        <end position="122"/>
    </location>
</feature>
<name>RL14_RHILW</name>
<reference key="1">
    <citation type="journal article" date="2010" name="Stand. Genomic Sci.">
        <title>Complete genome sequence of Rhizobium leguminosarum bv trifolii strain WSM2304, an effective microsymbiont of the South American clover Trifolium polymorphum.</title>
        <authorList>
            <person name="Reeve W."/>
            <person name="O'Hara G."/>
            <person name="Chain P."/>
            <person name="Ardley J."/>
            <person name="Brau L."/>
            <person name="Nandesena K."/>
            <person name="Tiwari R."/>
            <person name="Malfatti S."/>
            <person name="Kiss H."/>
            <person name="Lapidus A."/>
            <person name="Copeland A."/>
            <person name="Nolan M."/>
            <person name="Land M."/>
            <person name="Ivanova N."/>
            <person name="Mavromatis K."/>
            <person name="Markowitz V."/>
            <person name="Kyrpides N."/>
            <person name="Melino V."/>
            <person name="Denton M."/>
            <person name="Yates R."/>
            <person name="Howieson J."/>
        </authorList>
    </citation>
    <scope>NUCLEOTIDE SEQUENCE [LARGE SCALE GENOMIC DNA]</scope>
    <source>
        <strain>WSM2304</strain>
    </source>
</reference>
<accession>B5ZYU5</accession>
<proteinExistence type="inferred from homology"/>
<evidence type="ECO:0000255" key="1">
    <source>
        <dbReference type="HAMAP-Rule" id="MF_01367"/>
    </source>
</evidence>
<evidence type="ECO:0000305" key="2"/>
<dbReference type="EMBL" id="CP001191">
    <property type="protein sequence ID" value="ACI54636.1"/>
    <property type="molecule type" value="Genomic_DNA"/>
</dbReference>
<dbReference type="RefSeq" id="WP_003573790.1">
    <property type="nucleotide sequence ID" value="NC_011369.1"/>
</dbReference>
<dbReference type="SMR" id="B5ZYU5"/>
<dbReference type="STRING" id="395492.Rleg2_1342"/>
<dbReference type="GeneID" id="91148138"/>
<dbReference type="KEGG" id="rlt:Rleg2_1342"/>
<dbReference type="eggNOG" id="COG0093">
    <property type="taxonomic scope" value="Bacteria"/>
</dbReference>
<dbReference type="HOGENOM" id="CLU_095071_2_1_5"/>
<dbReference type="Proteomes" id="UP000008330">
    <property type="component" value="Chromosome"/>
</dbReference>
<dbReference type="GO" id="GO:0022625">
    <property type="term" value="C:cytosolic large ribosomal subunit"/>
    <property type="evidence" value="ECO:0007669"/>
    <property type="project" value="TreeGrafter"/>
</dbReference>
<dbReference type="GO" id="GO:0070180">
    <property type="term" value="F:large ribosomal subunit rRNA binding"/>
    <property type="evidence" value="ECO:0007669"/>
    <property type="project" value="TreeGrafter"/>
</dbReference>
<dbReference type="GO" id="GO:0003735">
    <property type="term" value="F:structural constituent of ribosome"/>
    <property type="evidence" value="ECO:0007669"/>
    <property type="project" value="InterPro"/>
</dbReference>
<dbReference type="GO" id="GO:0006412">
    <property type="term" value="P:translation"/>
    <property type="evidence" value="ECO:0007669"/>
    <property type="project" value="UniProtKB-UniRule"/>
</dbReference>
<dbReference type="CDD" id="cd00337">
    <property type="entry name" value="Ribosomal_uL14"/>
    <property type="match status" value="1"/>
</dbReference>
<dbReference type="FunFam" id="2.40.150.20:FF:000001">
    <property type="entry name" value="50S ribosomal protein L14"/>
    <property type="match status" value="1"/>
</dbReference>
<dbReference type="Gene3D" id="2.40.150.20">
    <property type="entry name" value="Ribosomal protein L14"/>
    <property type="match status" value="1"/>
</dbReference>
<dbReference type="HAMAP" id="MF_01367">
    <property type="entry name" value="Ribosomal_uL14"/>
    <property type="match status" value="1"/>
</dbReference>
<dbReference type="InterPro" id="IPR000218">
    <property type="entry name" value="Ribosomal_uL14"/>
</dbReference>
<dbReference type="InterPro" id="IPR005745">
    <property type="entry name" value="Ribosomal_uL14_bac-type"/>
</dbReference>
<dbReference type="InterPro" id="IPR019972">
    <property type="entry name" value="Ribosomal_uL14_CS"/>
</dbReference>
<dbReference type="InterPro" id="IPR036853">
    <property type="entry name" value="Ribosomal_uL14_sf"/>
</dbReference>
<dbReference type="NCBIfam" id="TIGR01067">
    <property type="entry name" value="rplN_bact"/>
    <property type="match status" value="1"/>
</dbReference>
<dbReference type="PANTHER" id="PTHR11761">
    <property type="entry name" value="50S/60S RIBOSOMAL PROTEIN L14/L23"/>
    <property type="match status" value="1"/>
</dbReference>
<dbReference type="PANTHER" id="PTHR11761:SF3">
    <property type="entry name" value="LARGE RIBOSOMAL SUBUNIT PROTEIN UL14M"/>
    <property type="match status" value="1"/>
</dbReference>
<dbReference type="Pfam" id="PF00238">
    <property type="entry name" value="Ribosomal_L14"/>
    <property type="match status" value="1"/>
</dbReference>
<dbReference type="SMART" id="SM01374">
    <property type="entry name" value="Ribosomal_L14"/>
    <property type="match status" value="1"/>
</dbReference>
<dbReference type="SUPFAM" id="SSF50193">
    <property type="entry name" value="Ribosomal protein L14"/>
    <property type="match status" value="1"/>
</dbReference>
<dbReference type="PROSITE" id="PS00049">
    <property type="entry name" value="RIBOSOMAL_L14"/>
    <property type="match status" value="1"/>
</dbReference>
<sequence length="122" mass="13419">MIQMQTNLDVADNSGARRVMCIKVLGGSKRKYASIGDVIVVSIKEAIPRGRVKKGDVMKAVVVRTAKDIRRPDGSVIRFDTNAAVLIDNKKEPIGTRIFGPVPRELRAKNHMKIISLAPEVL</sequence>